<gene>
    <name evidence="1" type="primary">rpmB</name>
    <name type="ordered locus">Bmul_0793</name>
    <name type="ordered locus">BMULJ_02467</name>
</gene>
<comment type="similarity">
    <text evidence="1">Belongs to the bacterial ribosomal protein bL28 family.</text>
</comment>
<dbReference type="EMBL" id="CP000868">
    <property type="protein sequence ID" value="ABX14488.1"/>
    <property type="molecule type" value="Genomic_DNA"/>
</dbReference>
<dbReference type="EMBL" id="AP009385">
    <property type="protein sequence ID" value="BAG44358.1"/>
    <property type="molecule type" value="Genomic_DNA"/>
</dbReference>
<dbReference type="RefSeq" id="WP_004186391.1">
    <property type="nucleotide sequence ID" value="NC_010804.1"/>
</dbReference>
<dbReference type="SMR" id="A9AHD5"/>
<dbReference type="STRING" id="395019.BMULJ_02467"/>
<dbReference type="GeneID" id="98107656"/>
<dbReference type="KEGG" id="bmj:BMULJ_02467"/>
<dbReference type="KEGG" id="bmu:Bmul_0793"/>
<dbReference type="eggNOG" id="COG0227">
    <property type="taxonomic scope" value="Bacteria"/>
</dbReference>
<dbReference type="HOGENOM" id="CLU_064548_3_1_4"/>
<dbReference type="Proteomes" id="UP000008815">
    <property type="component" value="Chromosome 1"/>
</dbReference>
<dbReference type="GO" id="GO:0022625">
    <property type="term" value="C:cytosolic large ribosomal subunit"/>
    <property type="evidence" value="ECO:0007669"/>
    <property type="project" value="TreeGrafter"/>
</dbReference>
<dbReference type="GO" id="GO:0003735">
    <property type="term" value="F:structural constituent of ribosome"/>
    <property type="evidence" value="ECO:0007669"/>
    <property type="project" value="InterPro"/>
</dbReference>
<dbReference type="GO" id="GO:0006412">
    <property type="term" value="P:translation"/>
    <property type="evidence" value="ECO:0007669"/>
    <property type="project" value="UniProtKB-UniRule"/>
</dbReference>
<dbReference type="FunFam" id="2.30.170.40:FF:000001">
    <property type="entry name" value="50S ribosomal protein L28"/>
    <property type="match status" value="1"/>
</dbReference>
<dbReference type="Gene3D" id="2.30.170.40">
    <property type="entry name" value="Ribosomal protein L28/L24"/>
    <property type="match status" value="1"/>
</dbReference>
<dbReference type="HAMAP" id="MF_00373">
    <property type="entry name" value="Ribosomal_bL28"/>
    <property type="match status" value="1"/>
</dbReference>
<dbReference type="InterPro" id="IPR026569">
    <property type="entry name" value="Ribosomal_bL28"/>
</dbReference>
<dbReference type="InterPro" id="IPR034704">
    <property type="entry name" value="Ribosomal_bL28/bL31-like_sf"/>
</dbReference>
<dbReference type="InterPro" id="IPR001383">
    <property type="entry name" value="Ribosomal_bL28_bact-type"/>
</dbReference>
<dbReference type="InterPro" id="IPR037147">
    <property type="entry name" value="Ribosomal_bL28_sf"/>
</dbReference>
<dbReference type="NCBIfam" id="TIGR00009">
    <property type="entry name" value="L28"/>
    <property type="match status" value="1"/>
</dbReference>
<dbReference type="PANTHER" id="PTHR13528">
    <property type="entry name" value="39S RIBOSOMAL PROTEIN L28, MITOCHONDRIAL"/>
    <property type="match status" value="1"/>
</dbReference>
<dbReference type="PANTHER" id="PTHR13528:SF2">
    <property type="entry name" value="LARGE RIBOSOMAL SUBUNIT PROTEIN BL28M"/>
    <property type="match status" value="1"/>
</dbReference>
<dbReference type="Pfam" id="PF00830">
    <property type="entry name" value="Ribosomal_L28"/>
    <property type="match status" value="1"/>
</dbReference>
<dbReference type="SUPFAM" id="SSF143800">
    <property type="entry name" value="L28p-like"/>
    <property type="match status" value="1"/>
</dbReference>
<evidence type="ECO:0000255" key="1">
    <source>
        <dbReference type="HAMAP-Rule" id="MF_00373"/>
    </source>
</evidence>
<evidence type="ECO:0000256" key="2">
    <source>
        <dbReference type="SAM" id="MobiDB-lite"/>
    </source>
</evidence>
<evidence type="ECO:0000305" key="3"/>
<keyword id="KW-1185">Reference proteome</keyword>
<keyword id="KW-0687">Ribonucleoprotein</keyword>
<keyword id="KW-0689">Ribosomal protein</keyword>
<reference key="1">
    <citation type="submission" date="2007-10" db="EMBL/GenBank/DDBJ databases">
        <title>Complete sequence of chromosome 1 of Burkholderia multivorans ATCC 17616.</title>
        <authorList>
            <person name="Copeland A."/>
            <person name="Lucas S."/>
            <person name="Lapidus A."/>
            <person name="Barry K."/>
            <person name="Glavina del Rio T."/>
            <person name="Dalin E."/>
            <person name="Tice H."/>
            <person name="Pitluck S."/>
            <person name="Chain P."/>
            <person name="Malfatti S."/>
            <person name="Shin M."/>
            <person name="Vergez L."/>
            <person name="Schmutz J."/>
            <person name="Larimer F."/>
            <person name="Land M."/>
            <person name="Hauser L."/>
            <person name="Kyrpides N."/>
            <person name="Kim E."/>
            <person name="Tiedje J."/>
            <person name="Richardson P."/>
        </authorList>
    </citation>
    <scope>NUCLEOTIDE SEQUENCE [LARGE SCALE GENOMIC DNA]</scope>
    <source>
        <strain>ATCC 17616 / 249</strain>
    </source>
</reference>
<reference key="2">
    <citation type="submission" date="2007-04" db="EMBL/GenBank/DDBJ databases">
        <title>Complete genome sequence of Burkholderia multivorans ATCC 17616.</title>
        <authorList>
            <person name="Ohtsubo Y."/>
            <person name="Yamashita A."/>
            <person name="Kurokawa K."/>
            <person name="Takami H."/>
            <person name="Yuhara S."/>
            <person name="Nishiyama E."/>
            <person name="Endo R."/>
            <person name="Miyazaki R."/>
            <person name="Ono A."/>
            <person name="Yano K."/>
            <person name="Ito M."/>
            <person name="Sota M."/>
            <person name="Yuji N."/>
            <person name="Hattori M."/>
            <person name="Tsuda M."/>
        </authorList>
    </citation>
    <scope>NUCLEOTIDE SEQUENCE [LARGE SCALE GENOMIC DNA]</scope>
    <source>
        <strain>ATCC 17616 / 249</strain>
    </source>
</reference>
<name>RL28_BURM1</name>
<accession>A9AHD5</accession>
<protein>
    <recommendedName>
        <fullName evidence="1">Large ribosomal subunit protein bL28</fullName>
    </recommendedName>
    <alternativeName>
        <fullName evidence="3">50S ribosomal protein L28</fullName>
    </alternativeName>
</protein>
<feature type="chain" id="PRO_1000121597" description="Large ribosomal subunit protein bL28">
    <location>
        <begin position="1"/>
        <end position="77"/>
    </location>
</feature>
<feature type="region of interest" description="Disordered" evidence="2">
    <location>
        <begin position="1"/>
        <end position="25"/>
    </location>
</feature>
<proteinExistence type="inferred from homology"/>
<sequence>MARVCQVTGKAPMSGNNVSHANNKTKRRFLPNLQNRRFWVESENRWVRLRVSNAGLRLIDKNGIDSVLADLRARGEA</sequence>
<organism>
    <name type="scientific">Burkholderia multivorans (strain ATCC 17616 / 249)</name>
    <dbReference type="NCBI Taxonomy" id="395019"/>
    <lineage>
        <taxon>Bacteria</taxon>
        <taxon>Pseudomonadati</taxon>
        <taxon>Pseudomonadota</taxon>
        <taxon>Betaproteobacteria</taxon>
        <taxon>Burkholderiales</taxon>
        <taxon>Burkholderiaceae</taxon>
        <taxon>Burkholderia</taxon>
        <taxon>Burkholderia cepacia complex</taxon>
    </lineage>
</organism>